<organism>
    <name type="scientific">Chloroflexus aggregans (strain MD-66 / DSM 9485)</name>
    <dbReference type="NCBI Taxonomy" id="326427"/>
    <lineage>
        <taxon>Bacteria</taxon>
        <taxon>Bacillati</taxon>
        <taxon>Chloroflexota</taxon>
        <taxon>Chloroflexia</taxon>
        <taxon>Chloroflexales</taxon>
        <taxon>Chloroflexineae</taxon>
        <taxon>Chloroflexaceae</taxon>
        <taxon>Chloroflexus</taxon>
    </lineage>
</organism>
<sequence length="564" mass="59307">MSDNRRSRMITEGPQRSPNRAMLRAVGFGDNDFTKPIVGVANGHSTLTPCNAGLGALAARAEAAIRAAGGMPQIFGTITVSDGISMGTEGMKYSLVSREVIADSIETVVNAQRMDGILAVGGCDKNMPGALIAMARLDIPAIFVYGGTIKPGHYKGRDLTIVSVFEAVGEYSAGRIDEHELLEIERHACPGVGSCGGMYTANTMSSAIEALGLSLPGSSTMAAEDEEKAISAARSGEVLVEAIRANRTARQMLTRKSFENAIAVVMALGGSTNAVLHLLAIAYAANVPLTIDDFETIRQRVPVLCDLKPSGRYVATDLHRVGGVPQVMKMLLNAGLLHGDCMTITGQTIAEVLADVPDEPPADQDVIRPFHKPLYPQGHLAILRGNLAEEGCVAKITGIKQRSITGPARVFDAEEECLEAILSGKIKPGDVVVIRYEGPKGGPGMREMLAPTSAIIGAGLGDSVGLITDGRFSGGTYGLVVGHVAPEAAVGGTIALVEEGDSITIDADARLLQLNVSDEELARRRAAWQPRPPRYTRGVLAKYARLVSSASLGAVTDRFDGESA</sequence>
<name>ILVD_CHLAD</name>
<evidence type="ECO:0000255" key="1">
    <source>
        <dbReference type="HAMAP-Rule" id="MF_00012"/>
    </source>
</evidence>
<proteinExistence type="inferred from homology"/>
<dbReference type="EC" id="4.2.1.9" evidence="1"/>
<dbReference type="EMBL" id="CP001337">
    <property type="protein sequence ID" value="ACL24019.1"/>
    <property type="molecule type" value="Genomic_DNA"/>
</dbReference>
<dbReference type="RefSeq" id="WP_012616383.1">
    <property type="nucleotide sequence ID" value="NC_011831.1"/>
</dbReference>
<dbReference type="SMR" id="B8G762"/>
<dbReference type="STRING" id="326427.Cagg_1109"/>
<dbReference type="KEGG" id="cag:Cagg_1109"/>
<dbReference type="eggNOG" id="COG0129">
    <property type="taxonomic scope" value="Bacteria"/>
</dbReference>
<dbReference type="HOGENOM" id="CLU_014271_4_1_0"/>
<dbReference type="OrthoDB" id="9807077at2"/>
<dbReference type="UniPathway" id="UPA00047">
    <property type="reaction ID" value="UER00057"/>
</dbReference>
<dbReference type="UniPathway" id="UPA00049">
    <property type="reaction ID" value="UER00061"/>
</dbReference>
<dbReference type="Proteomes" id="UP000002508">
    <property type="component" value="Chromosome"/>
</dbReference>
<dbReference type="GO" id="GO:0051537">
    <property type="term" value="F:2 iron, 2 sulfur cluster binding"/>
    <property type="evidence" value="ECO:0007669"/>
    <property type="project" value="UniProtKB-UniRule"/>
</dbReference>
<dbReference type="GO" id="GO:0004160">
    <property type="term" value="F:dihydroxy-acid dehydratase activity"/>
    <property type="evidence" value="ECO:0007669"/>
    <property type="project" value="UniProtKB-UniRule"/>
</dbReference>
<dbReference type="GO" id="GO:0000287">
    <property type="term" value="F:magnesium ion binding"/>
    <property type="evidence" value="ECO:0007669"/>
    <property type="project" value="UniProtKB-UniRule"/>
</dbReference>
<dbReference type="GO" id="GO:0009097">
    <property type="term" value="P:isoleucine biosynthetic process"/>
    <property type="evidence" value="ECO:0007669"/>
    <property type="project" value="UniProtKB-UniRule"/>
</dbReference>
<dbReference type="GO" id="GO:0009099">
    <property type="term" value="P:L-valine biosynthetic process"/>
    <property type="evidence" value="ECO:0007669"/>
    <property type="project" value="UniProtKB-UniRule"/>
</dbReference>
<dbReference type="FunFam" id="3.50.30.80:FF:000001">
    <property type="entry name" value="Dihydroxy-acid dehydratase"/>
    <property type="match status" value="1"/>
</dbReference>
<dbReference type="Gene3D" id="3.50.30.80">
    <property type="entry name" value="IlvD/EDD C-terminal domain-like"/>
    <property type="match status" value="1"/>
</dbReference>
<dbReference type="HAMAP" id="MF_00012">
    <property type="entry name" value="IlvD"/>
    <property type="match status" value="1"/>
</dbReference>
<dbReference type="InterPro" id="IPR050165">
    <property type="entry name" value="DHAD_IlvD/Edd"/>
</dbReference>
<dbReference type="InterPro" id="IPR042096">
    <property type="entry name" value="Dihydro-acid_dehy_C"/>
</dbReference>
<dbReference type="InterPro" id="IPR004404">
    <property type="entry name" value="DihydroxyA_deHydtase"/>
</dbReference>
<dbReference type="InterPro" id="IPR020558">
    <property type="entry name" value="DiOHA_6PGluconate_deHydtase_CS"/>
</dbReference>
<dbReference type="InterPro" id="IPR056740">
    <property type="entry name" value="ILV_EDD_C"/>
</dbReference>
<dbReference type="InterPro" id="IPR000581">
    <property type="entry name" value="ILV_EDD_N"/>
</dbReference>
<dbReference type="InterPro" id="IPR037237">
    <property type="entry name" value="IlvD/EDD_N"/>
</dbReference>
<dbReference type="NCBIfam" id="TIGR00110">
    <property type="entry name" value="ilvD"/>
    <property type="match status" value="1"/>
</dbReference>
<dbReference type="NCBIfam" id="NF002068">
    <property type="entry name" value="PRK00911.1"/>
    <property type="match status" value="1"/>
</dbReference>
<dbReference type="PANTHER" id="PTHR21000">
    <property type="entry name" value="DIHYDROXY-ACID DEHYDRATASE DAD"/>
    <property type="match status" value="1"/>
</dbReference>
<dbReference type="PANTHER" id="PTHR21000:SF5">
    <property type="entry name" value="DIHYDROXY-ACID DEHYDRATASE, MITOCHONDRIAL"/>
    <property type="match status" value="1"/>
</dbReference>
<dbReference type="Pfam" id="PF24877">
    <property type="entry name" value="ILV_EDD_C"/>
    <property type="match status" value="1"/>
</dbReference>
<dbReference type="Pfam" id="PF00920">
    <property type="entry name" value="ILVD_EDD_N"/>
    <property type="match status" value="1"/>
</dbReference>
<dbReference type="SUPFAM" id="SSF143975">
    <property type="entry name" value="IlvD/EDD N-terminal domain-like"/>
    <property type="match status" value="1"/>
</dbReference>
<dbReference type="SUPFAM" id="SSF52016">
    <property type="entry name" value="LeuD/IlvD-like"/>
    <property type="match status" value="1"/>
</dbReference>
<dbReference type="PROSITE" id="PS00886">
    <property type="entry name" value="ILVD_EDD_1"/>
    <property type="match status" value="1"/>
</dbReference>
<dbReference type="PROSITE" id="PS00887">
    <property type="entry name" value="ILVD_EDD_2"/>
    <property type="match status" value="1"/>
</dbReference>
<keyword id="KW-0001">2Fe-2S</keyword>
<keyword id="KW-0028">Amino-acid biosynthesis</keyword>
<keyword id="KW-0100">Branched-chain amino acid biosynthesis</keyword>
<keyword id="KW-0408">Iron</keyword>
<keyword id="KW-0411">Iron-sulfur</keyword>
<keyword id="KW-0456">Lyase</keyword>
<keyword id="KW-0460">Magnesium</keyword>
<keyword id="KW-0479">Metal-binding</keyword>
<reference key="1">
    <citation type="submission" date="2008-12" db="EMBL/GenBank/DDBJ databases">
        <title>Complete sequence of Chloroflexus aggregans DSM 9485.</title>
        <authorList>
            <consortium name="US DOE Joint Genome Institute"/>
            <person name="Lucas S."/>
            <person name="Copeland A."/>
            <person name="Lapidus A."/>
            <person name="Glavina del Rio T."/>
            <person name="Dalin E."/>
            <person name="Tice H."/>
            <person name="Pitluck S."/>
            <person name="Foster B."/>
            <person name="Larimer F."/>
            <person name="Land M."/>
            <person name="Hauser L."/>
            <person name="Kyrpides N."/>
            <person name="Mikhailova N."/>
            <person name="Bryant D.A."/>
            <person name="Richardson P."/>
        </authorList>
    </citation>
    <scope>NUCLEOTIDE SEQUENCE [LARGE SCALE GENOMIC DNA]</scope>
    <source>
        <strain>MD-66 / DSM 9485</strain>
    </source>
</reference>
<gene>
    <name evidence="1" type="primary">ilvD</name>
    <name type="ordered locus">Cagg_1109</name>
</gene>
<feature type="chain" id="PRO_1000190657" description="Dihydroxy-acid dehydratase">
    <location>
        <begin position="1"/>
        <end position="564"/>
    </location>
</feature>
<feature type="active site" description="Proton acceptor" evidence="1">
    <location>
        <position position="473"/>
    </location>
</feature>
<feature type="binding site" evidence="1">
    <location>
        <position position="50"/>
    </location>
    <ligand>
        <name>[2Fe-2S] cluster</name>
        <dbReference type="ChEBI" id="CHEBI:190135"/>
    </ligand>
</feature>
<feature type="binding site" evidence="1">
    <location>
        <position position="82"/>
    </location>
    <ligand>
        <name>Mg(2+)</name>
        <dbReference type="ChEBI" id="CHEBI:18420"/>
    </ligand>
</feature>
<feature type="binding site" evidence="1">
    <location>
        <position position="123"/>
    </location>
    <ligand>
        <name>[2Fe-2S] cluster</name>
        <dbReference type="ChEBI" id="CHEBI:190135"/>
    </ligand>
</feature>
<feature type="binding site" evidence="1">
    <location>
        <position position="124"/>
    </location>
    <ligand>
        <name>Mg(2+)</name>
        <dbReference type="ChEBI" id="CHEBI:18420"/>
    </ligand>
</feature>
<feature type="binding site" description="via carbamate group" evidence="1">
    <location>
        <position position="125"/>
    </location>
    <ligand>
        <name>Mg(2+)</name>
        <dbReference type="ChEBI" id="CHEBI:18420"/>
    </ligand>
</feature>
<feature type="binding site" evidence="1">
    <location>
        <position position="195"/>
    </location>
    <ligand>
        <name>[2Fe-2S] cluster</name>
        <dbReference type="ChEBI" id="CHEBI:190135"/>
    </ligand>
</feature>
<feature type="binding site" evidence="1">
    <location>
        <position position="447"/>
    </location>
    <ligand>
        <name>Mg(2+)</name>
        <dbReference type="ChEBI" id="CHEBI:18420"/>
    </ligand>
</feature>
<feature type="modified residue" description="N6-carboxylysine" evidence="1">
    <location>
        <position position="125"/>
    </location>
</feature>
<accession>B8G762</accession>
<protein>
    <recommendedName>
        <fullName evidence="1">Dihydroxy-acid dehydratase</fullName>
        <shortName evidence="1">DAD</shortName>
        <ecNumber evidence="1">4.2.1.9</ecNumber>
    </recommendedName>
</protein>
<comment type="function">
    <text evidence="1">Functions in the biosynthesis of branched-chain amino acids. Catalyzes the dehydration of (2R,3R)-2,3-dihydroxy-3-methylpentanoate (2,3-dihydroxy-3-methylvalerate) into 2-oxo-3-methylpentanoate (2-oxo-3-methylvalerate) and of (2R)-2,3-dihydroxy-3-methylbutanoate (2,3-dihydroxyisovalerate) into 2-oxo-3-methylbutanoate (2-oxoisovalerate), the penultimate precursor to L-isoleucine and L-valine, respectively.</text>
</comment>
<comment type="catalytic activity">
    <reaction evidence="1">
        <text>(2R)-2,3-dihydroxy-3-methylbutanoate = 3-methyl-2-oxobutanoate + H2O</text>
        <dbReference type="Rhea" id="RHEA:24809"/>
        <dbReference type="ChEBI" id="CHEBI:11851"/>
        <dbReference type="ChEBI" id="CHEBI:15377"/>
        <dbReference type="ChEBI" id="CHEBI:49072"/>
        <dbReference type="EC" id="4.2.1.9"/>
    </reaction>
    <physiologicalReaction direction="left-to-right" evidence="1">
        <dbReference type="Rhea" id="RHEA:24810"/>
    </physiologicalReaction>
</comment>
<comment type="catalytic activity">
    <reaction evidence="1">
        <text>(2R,3R)-2,3-dihydroxy-3-methylpentanoate = (S)-3-methyl-2-oxopentanoate + H2O</text>
        <dbReference type="Rhea" id="RHEA:27694"/>
        <dbReference type="ChEBI" id="CHEBI:15377"/>
        <dbReference type="ChEBI" id="CHEBI:35146"/>
        <dbReference type="ChEBI" id="CHEBI:49258"/>
        <dbReference type="EC" id="4.2.1.9"/>
    </reaction>
    <physiologicalReaction direction="left-to-right" evidence="1">
        <dbReference type="Rhea" id="RHEA:27695"/>
    </physiologicalReaction>
</comment>
<comment type="cofactor">
    <cofactor evidence="1">
        <name>[2Fe-2S] cluster</name>
        <dbReference type="ChEBI" id="CHEBI:190135"/>
    </cofactor>
    <text evidence="1">Binds 1 [2Fe-2S] cluster per subunit. This cluster acts as a Lewis acid cofactor.</text>
</comment>
<comment type="cofactor">
    <cofactor evidence="1">
        <name>Mg(2+)</name>
        <dbReference type="ChEBI" id="CHEBI:18420"/>
    </cofactor>
</comment>
<comment type="pathway">
    <text evidence="1">Amino-acid biosynthesis; L-isoleucine biosynthesis; L-isoleucine from 2-oxobutanoate: step 3/4.</text>
</comment>
<comment type="pathway">
    <text evidence="1">Amino-acid biosynthesis; L-valine biosynthesis; L-valine from pyruvate: step 3/4.</text>
</comment>
<comment type="subunit">
    <text evidence="1">Homodimer.</text>
</comment>
<comment type="similarity">
    <text evidence="1">Belongs to the IlvD/Edd family.</text>
</comment>